<feature type="chain" id="PRO_0000377402" description="Protein phosphatase PTC7 homolog fig">
    <location>
        <begin position="1"/>
        <end position="314"/>
    </location>
</feature>
<feature type="domain" description="PPM-type phosphatase" evidence="4">
    <location>
        <begin position="43"/>
        <end position="309"/>
    </location>
</feature>
<feature type="binding site" evidence="1">
    <location>
        <position position="87"/>
    </location>
    <ligand>
        <name>Mn(2+)</name>
        <dbReference type="ChEBI" id="CHEBI:29035"/>
        <label>1</label>
    </ligand>
</feature>
<feature type="binding site" evidence="1">
    <location>
        <position position="87"/>
    </location>
    <ligand>
        <name>Mn(2+)</name>
        <dbReference type="ChEBI" id="CHEBI:29035"/>
        <label>2</label>
    </ligand>
</feature>
<feature type="binding site" evidence="1">
    <location>
        <position position="88"/>
    </location>
    <ligand>
        <name>Mn(2+)</name>
        <dbReference type="ChEBI" id="CHEBI:29035"/>
        <label>1</label>
    </ligand>
</feature>
<feature type="binding site" evidence="1">
    <location>
        <position position="232"/>
    </location>
    <ligand>
        <name>Mn(2+)</name>
        <dbReference type="ChEBI" id="CHEBI:29035"/>
        <label>2</label>
    </ligand>
</feature>
<comment type="catalytic activity">
    <reaction>
        <text>O-phospho-L-seryl-[protein] + H2O = L-seryl-[protein] + phosphate</text>
        <dbReference type="Rhea" id="RHEA:20629"/>
        <dbReference type="Rhea" id="RHEA-COMP:9863"/>
        <dbReference type="Rhea" id="RHEA-COMP:11604"/>
        <dbReference type="ChEBI" id="CHEBI:15377"/>
        <dbReference type="ChEBI" id="CHEBI:29999"/>
        <dbReference type="ChEBI" id="CHEBI:43474"/>
        <dbReference type="ChEBI" id="CHEBI:83421"/>
        <dbReference type="EC" id="3.1.3.16"/>
    </reaction>
</comment>
<comment type="catalytic activity">
    <reaction>
        <text>O-phospho-L-threonyl-[protein] + H2O = L-threonyl-[protein] + phosphate</text>
        <dbReference type="Rhea" id="RHEA:47004"/>
        <dbReference type="Rhea" id="RHEA-COMP:11060"/>
        <dbReference type="Rhea" id="RHEA-COMP:11605"/>
        <dbReference type="ChEBI" id="CHEBI:15377"/>
        <dbReference type="ChEBI" id="CHEBI:30013"/>
        <dbReference type="ChEBI" id="CHEBI:43474"/>
        <dbReference type="ChEBI" id="CHEBI:61977"/>
        <dbReference type="EC" id="3.1.3.16"/>
    </reaction>
</comment>
<comment type="cofactor">
    <cofactor evidence="1 5">
        <name>Mg(2+)</name>
        <dbReference type="ChEBI" id="CHEBI:18420"/>
    </cofactor>
    <cofactor evidence="1 5">
        <name>Mn(2+)</name>
        <dbReference type="ChEBI" id="CHEBI:29035"/>
    </cofactor>
</comment>
<comment type="similarity">
    <text evidence="3">Belongs to the PP2C family.</text>
</comment>
<organism>
    <name type="scientific">Drosophila sechellia</name>
    <name type="common">Fruit fly</name>
    <dbReference type="NCBI Taxonomy" id="7238"/>
    <lineage>
        <taxon>Eukaryota</taxon>
        <taxon>Metazoa</taxon>
        <taxon>Ecdysozoa</taxon>
        <taxon>Arthropoda</taxon>
        <taxon>Hexapoda</taxon>
        <taxon>Insecta</taxon>
        <taxon>Pterygota</taxon>
        <taxon>Neoptera</taxon>
        <taxon>Endopterygota</taxon>
        <taxon>Diptera</taxon>
        <taxon>Brachycera</taxon>
        <taxon>Muscomorpha</taxon>
        <taxon>Ephydroidea</taxon>
        <taxon>Drosophilidae</taxon>
        <taxon>Drosophila</taxon>
        <taxon>Sophophora</taxon>
    </lineage>
</organism>
<dbReference type="EC" id="3.1.3.16"/>
<dbReference type="EMBL" id="CH480819">
    <property type="protein sequence ID" value="EDW53404.1"/>
    <property type="molecule type" value="Genomic_DNA"/>
</dbReference>
<dbReference type="SMR" id="B4HZE7"/>
<dbReference type="STRING" id="7238.B4HZE7"/>
<dbReference type="EnsemblMetazoa" id="FBtr0195208">
    <property type="protein sequence ID" value="FBpp0193700"/>
    <property type="gene ID" value="FBgn0167160"/>
</dbReference>
<dbReference type="EnsemblMetazoa" id="XM_002037209.2">
    <property type="protein sequence ID" value="XP_002037245.1"/>
    <property type="gene ID" value="LOC6612742"/>
</dbReference>
<dbReference type="GeneID" id="6612742"/>
<dbReference type="KEGG" id="dse:6612742"/>
<dbReference type="CTD" id="43511"/>
<dbReference type="HOGENOM" id="CLU_029404_3_0_1"/>
<dbReference type="OMA" id="DSWFVSS"/>
<dbReference type="OrthoDB" id="49517at7215"/>
<dbReference type="PhylomeDB" id="B4HZE7"/>
<dbReference type="Proteomes" id="UP000001292">
    <property type="component" value="Unassembled WGS sequence"/>
</dbReference>
<dbReference type="GO" id="GO:0005739">
    <property type="term" value="C:mitochondrion"/>
    <property type="evidence" value="ECO:0007669"/>
    <property type="project" value="TreeGrafter"/>
</dbReference>
<dbReference type="GO" id="GO:0046872">
    <property type="term" value="F:metal ion binding"/>
    <property type="evidence" value="ECO:0007669"/>
    <property type="project" value="UniProtKB-KW"/>
</dbReference>
<dbReference type="GO" id="GO:0004722">
    <property type="term" value="F:protein serine/threonine phosphatase activity"/>
    <property type="evidence" value="ECO:0000250"/>
    <property type="project" value="UniProtKB"/>
</dbReference>
<dbReference type="GO" id="GO:0016311">
    <property type="term" value="P:dephosphorylation"/>
    <property type="evidence" value="ECO:0000250"/>
    <property type="project" value="UniProtKB"/>
</dbReference>
<dbReference type="CDD" id="cd00143">
    <property type="entry name" value="PP2Cc"/>
    <property type="match status" value="1"/>
</dbReference>
<dbReference type="FunFam" id="3.60.40.10:FF:000009">
    <property type="entry name" value="Blast:Protein phosphatase PTC7 homolog"/>
    <property type="match status" value="1"/>
</dbReference>
<dbReference type="Gene3D" id="3.60.40.10">
    <property type="entry name" value="PPM-type phosphatase domain"/>
    <property type="match status" value="1"/>
</dbReference>
<dbReference type="InterPro" id="IPR036457">
    <property type="entry name" value="PPM-type-like_dom_sf"/>
</dbReference>
<dbReference type="InterPro" id="IPR001932">
    <property type="entry name" value="PPM-type_phosphatase-like_dom"/>
</dbReference>
<dbReference type="InterPro" id="IPR039123">
    <property type="entry name" value="PPTC7"/>
</dbReference>
<dbReference type="PANTHER" id="PTHR12320">
    <property type="entry name" value="PROTEIN PHOSPHATASE 2C"/>
    <property type="match status" value="1"/>
</dbReference>
<dbReference type="PANTHER" id="PTHR12320:SF1">
    <property type="entry name" value="PROTEIN PHOSPHATASE PTC7 HOMOLOG"/>
    <property type="match status" value="1"/>
</dbReference>
<dbReference type="Pfam" id="PF07228">
    <property type="entry name" value="SpoIIE"/>
    <property type="match status" value="1"/>
</dbReference>
<dbReference type="SMART" id="SM00331">
    <property type="entry name" value="PP2C_SIG"/>
    <property type="match status" value="1"/>
</dbReference>
<dbReference type="SMART" id="SM00332">
    <property type="entry name" value="PP2Cc"/>
    <property type="match status" value="1"/>
</dbReference>
<dbReference type="SUPFAM" id="SSF81606">
    <property type="entry name" value="PP2C-like"/>
    <property type="match status" value="1"/>
</dbReference>
<dbReference type="PROSITE" id="PS51746">
    <property type="entry name" value="PPM_2"/>
    <property type="match status" value="1"/>
</dbReference>
<keyword id="KW-0378">Hydrolase</keyword>
<keyword id="KW-0460">Magnesium</keyword>
<keyword id="KW-0464">Manganese</keyword>
<keyword id="KW-0479">Metal-binding</keyword>
<keyword id="KW-0904">Protein phosphatase</keyword>
<keyword id="KW-1185">Reference proteome</keyword>
<accession>B4HZE7</accession>
<gene>
    <name evidence="2" type="primary">fig</name>
    <name type="ORF">GM12223</name>
</gene>
<proteinExistence type="inferred from homology"/>
<sequence>MITRLKNWPCLLKRFSIQQIHQFTHLSGRFERAPQSSKSPRDPYLVTVVQGRSKKPRFPGERSNQRFGEDSWFVNSTPLAEVMGVADGVGGWRDLGVDAGRFAKELMSCCSGQTQLSDFDGRSPRNLLIAGFQELSHREQPVVGSSTACLATMHRKDCTLYTANLGDSGFLVVRNGRVLHRSVEQTHDFNTPYQLTVPPEDRKESYYCDKPEMAVSSRHSLLPGDLVLLATDGLFDNMPESMLLSILNGLKERGERDLLEGASRVVEKARELSLNASFQSPFAIKARQHNVSYSGGGKPDDITLILSSVEVPSV</sequence>
<reference evidence="6" key="1">
    <citation type="journal article" date="2007" name="Nature">
        <title>Evolution of genes and genomes on the Drosophila phylogeny.</title>
        <authorList>
            <consortium name="Drosophila 12 genomes consortium"/>
        </authorList>
    </citation>
    <scope>NUCLEOTIDE SEQUENCE [LARGE SCALE GENOMIC DNA]</scope>
    <source>
        <strain evidence="6">Rob3c / Tucson 14021-0248.25</strain>
    </source>
</reference>
<name>PTC71_DROSE</name>
<evidence type="ECO:0000250" key="1">
    <source>
        <dbReference type="UniProtKB" id="P35813"/>
    </source>
</evidence>
<evidence type="ECO:0000250" key="2">
    <source>
        <dbReference type="UniProtKB" id="Q9VAH4"/>
    </source>
</evidence>
<evidence type="ECO:0000255" key="3"/>
<evidence type="ECO:0000255" key="4">
    <source>
        <dbReference type="PROSITE-ProRule" id="PRU01082"/>
    </source>
</evidence>
<evidence type="ECO:0000305" key="5"/>
<evidence type="ECO:0000312" key="6">
    <source>
        <dbReference type="EMBL" id="EDW53404.1"/>
    </source>
</evidence>
<protein>
    <recommendedName>
        <fullName>Protein phosphatase PTC7 homolog fig</fullName>
    </recommendedName>
    <alternativeName>
        <fullName>Fos intronic gene protein</fullName>
        <ecNumber>3.1.3.16</ecNumber>
    </alternativeName>
</protein>